<comment type="function">
    <text evidence="1">Stabilizes the interaction between PsaC and the PSI core, assists the docking of the ferredoxin to PSI and interacts with ferredoxin-NADP oxidoreductase.</text>
</comment>
<comment type="subcellular location">
    <subcellularLocation>
        <location evidence="1">Cellular thylakoid membrane</location>
        <topology evidence="1">Peripheral membrane protein</topology>
    </subcellularLocation>
</comment>
<comment type="similarity">
    <text evidence="1">Belongs to the PsaE family.</text>
</comment>
<reference key="1">
    <citation type="journal article" date="2007" name="ISME J.">
        <title>Population level functional diversity in a microbial community revealed by comparative genomic and metagenomic analyses.</title>
        <authorList>
            <person name="Bhaya D."/>
            <person name="Grossman A.R."/>
            <person name="Steunou A.-S."/>
            <person name="Khuri N."/>
            <person name="Cohan F.M."/>
            <person name="Hamamura N."/>
            <person name="Melendrez M.C."/>
            <person name="Bateson M.M."/>
            <person name="Ward D.M."/>
            <person name="Heidelberg J.F."/>
        </authorList>
    </citation>
    <scope>NUCLEOTIDE SEQUENCE [LARGE SCALE GENOMIC DNA]</scope>
    <source>
        <strain>JA-3-3Ab</strain>
    </source>
</reference>
<gene>
    <name evidence="1" type="primary">psaE</name>
    <name type="ordered locus">CYA_0204</name>
</gene>
<organism>
    <name type="scientific">Synechococcus sp. (strain JA-3-3Ab)</name>
    <name type="common">Cyanobacteria bacterium Yellowstone A-Prime</name>
    <dbReference type="NCBI Taxonomy" id="321327"/>
    <lineage>
        <taxon>Bacteria</taxon>
        <taxon>Bacillati</taxon>
        <taxon>Cyanobacteriota</taxon>
        <taxon>Cyanophyceae</taxon>
        <taxon>Synechococcales</taxon>
        <taxon>Synechococcaceae</taxon>
        <taxon>Synechococcus</taxon>
    </lineage>
</organism>
<protein>
    <recommendedName>
        <fullName evidence="1">Photosystem I reaction center subunit IV</fullName>
    </recommendedName>
</protein>
<name>PSAE_SYNJA</name>
<keyword id="KW-0472">Membrane</keyword>
<keyword id="KW-0602">Photosynthesis</keyword>
<keyword id="KW-0603">Photosystem I</keyword>
<keyword id="KW-0793">Thylakoid</keyword>
<dbReference type="EMBL" id="CP000239">
    <property type="protein sequence ID" value="ABC98428.1"/>
    <property type="molecule type" value="Genomic_DNA"/>
</dbReference>
<dbReference type="RefSeq" id="WP_011429119.1">
    <property type="nucleotide sequence ID" value="NC_007775.1"/>
</dbReference>
<dbReference type="SMR" id="Q2JXQ1"/>
<dbReference type="STRING" id="321327.CYA_0204"/>
<dbReference type="KEGG" id="cya:CYA_0204"/>
<dbReference type="eggNOG" id="ENOG503313D">
    <property type="taxonomic scope" value="Bacteria"/>
</dbReference>
<dbReference type="HOGENOM" id="CLU_136462_2_1_3"/>
<dbReference type="OrthoDB" id="427926at2"/>
<dbReference type="Proteomes" id="UP000008818">
    <property type="component" value="Chromosome"/>
</dbReference>
<dbReference type="GO" id="GO:0009538">
    <property type="term" value="C:photosystem I reaction center"/>
    <property type="evidence" value="ECO:0007669"/>
    <property type="project" value="InterPro"/>
</dbReference>
<dbReference type="GO" id="GO:0031676">
    <property type="term" value="C:plasma membrane-derived thylakoid membrane"/>
    <property type="evidence" value="ECO:0007669"/>
    <property type="project" value="UniProtKB-SubCell"/>
</dbReference>
<dbReference type="GO" id="GO:0015979">
    <property type="term" value="P:photosynthesis"/>
    <property type="evidence" value="ECO:0007669"/>
    <property type="project" value="UniProtKB-UniRule"/>
</dbReference>
<dbReference type="Gene3D" id="2.30.30.50">
    <property type="match status" value="1"/>
</dbReference>
<dbReference type="HAMAP" id="MF_00613">
    <property type="entry name" value="PSI_PsaE"/>
    <property type="match status" value="1"/>
</dbReference>
<dbReference type="InterPro" id="IPR008990">
    <property type="entry name" value="Elect_transpt_acc-like_dom_sf"/>
</dbReference>
<dbReference type="InterPro" id="IPR003375">
    <property type="entry name" value="PSI_PsaE"/>
</dbReference>
<dbReference type="NCBIfam" id="NF002745">
    <property type="entry name" value="PRK02749.1"/>
    <property type="match status" value="1"/>
</dbReference>
<dbReference type="PANTHER" id="PTHR34549">
    <property type="entry name" value="PHOTOSYSTEM I REACTION CENTER SUBUNIT IV A, CHLOROPLASTIC-RELATED"/>
    <property type="match status" value="1"/>
</dbReference>
<dbReference type="PANTHER" id="PTHR34549:SF2">
    <property type="entry name" value="PHOTOSYSTEM I SUBUNIT IV"/>
    <property type="match status" value="1"/>
</dbReference>
<dbReference type="Pfam" id="PF02427">
    <property type="entry name" value="PSI_PsaE"/>
    <property type="match status" value="1"/>
</dbReference>
<dbReference type="SUPFAM" id="SSF50090">
    <property type="entry name" value="Electron transport accessory proteins"/>
    <property type="match status" value="1"/>
</dbReference>
<feature type="chain" id="PRO_1000061309" description="Photosystem I reaction center subunit IV">
    <location>
        <begin position="1"/>
        <end position="73"/>
    </location>
</feature>
<evidence type="ECO:0000255" key="1">
    <source>
        <dbReference type="HAMAP-Rule" id="MF_00613"/>
    </source>
</evidence>
<accession>Q2JXQ1</accession>
<sequence>MAIQRGAKVRVLRKESYWYRDVGTVAAVDTSGILYPVIVRFDKINYYNINTNNFREDELEVVEEPKPKAKASS</sequence>
<proteinExistence type="inferred from homology"/>